<name>TRUA_PARM1</name>
<comment type="function">
    <text evidence="1">Formation of pseudouridine at positions 38, 39 and 40 in the anticodon stem and loop of transfer RNAs.</text>
</comment>
<comment type="catalytic activity">
    <reaction evidence="1">
        <text>uridine(38/39/40) in tRNA = pseudouridine(38/39/40) in tRNA</text>
        <dbReference type="Rhea" id="RHEA:22376"/>
        <dbReference type="Rhea" id="RHEA-COMP:10085"/>
        <dbReference type="Rhea" id="RHEA-COMP:10087"/>
        <dbReference type="ChEBI" id="CHEBI:65314"/>
        <dbReference type="ChEBI" id="CHEBI:65315"/>
        <dbReference type="EC" id="5.4.99.12"/>
    </reaction>
</comment>
<comment type="subunit">
    <text evidence="1">Homodimer.</text>
</comment>
<comment type="similarity">
    <text evidence="1">Belongs to the tRNA pseudouridine synthase TruA family.</text>
</comment>
<sequence length="256" mass="27914">MPRYRLLVEYDGTPFNGWQRQDKGLSVQGILEKAVEKLCGVPCTLHAAGRTDAGVHATGQVAHVDLPRDYPADTVRDALNYHMKPKPVAVVAAELVDEDFHARFSAVGRAYLYRIVNRRAPLALDQHRAWWVPVALDAEAMAEGARRLLGHHDFSTFRASECQAKSPMKTLDVLDVTRVGEEIRIVAEARSFLHHQVRNMVGTLKLVGEGKWSPDDMAKVLEARDRTKGGPTAPAAGLVLTGVSYSASGGKSGPTG</sequence>
<dbReference type="EC" id="5.4.99.12" evidence="1"/>
<dbReference type="EMBL" id="AP007255">
    <property type="protein sequence ID" value="BAE49045.1"/>
    <property type="molecule type" value="Genomic_DNA"/>
</dbReference>
<dbReference type="RefSeq" id="WP_011382688.1">
    <property type="nucleotide sequence ID" value="NC_007626.1"/>
</dbReference>
<dbReference type="SMR" id="Q2WAT0"/>
<dbReference type="STRING" id="342108.amb0241"/>
<dbReference type="KEGG" id="mag:amb0241"/>
<dbReference type="HOGENOM" id="CLU_014673_0_2_5"/>
<dbReference type="OrthoDB" id="9811823at2"/>
<dbReference type="Proteomes" id="UP000007058">
    <property type="component" value="Chromosome"/>
</dbReference>
<dbReference type="GO" id="GO:0003723">
    <property type="term" value="F:RNA binding"/>
    <property type="evidence" value="ECO:0007669"/>
    <property type="project" value="InterPro"/>
</dbReference>
<dbReference type="GO" id="GO:0160147">
    <property type="term" value="F:tRNA pseudouridine(38-40) synthase activity"/>
    <property type="evidence" value="ECO:0007669"/>
    <property type="project" value="UniProtKB-EC"/>
</dbReference>
<dbReference type="GO" id="GO:0031119">
    <property type="term" value="P:tRNA pseudouridine synthesis"/>
    <property type="evidence" value="ECO:0007669"/>
    <property type="project" value="UniProtKB-UniRule"/>
</dbReference>
<dbReference type="CDD" id="cd02570">
    <property type="entry name" value="PseudoU_synth_EcTruA"/>
    <property type="match status" value="1"/>
</dbReference>
<dbReference type="FunFam" id="3.30.70.580:FF:000001">
    <property type="entry name" value="tRNA pseudouridine synthase A"/>
    <property type="match status" value="1"/>
</dbReference>
<dbReference type="Gene3D" id="3.30.70.660">
    <property type="entry name" value="Pseudouridine synthase I, catalytic domain, C-terminal subdomain"/>
    <property type="match status" value="1"/>
</dbReference>
<dbReference type="Gene3D" id="3.30.70.580">
    <property type="entry name" value="Pseudouridine synthase I, catalytic domain, N-terminal subdomain"/>
    <property type="match status" value="1"/>
</dbReference>
<dbReference type="HAMAP" id="MF_00171">
    <property type="entry name" value="TruA"/>
    <property type="match status" value="1"/>
</dbReference>
<dbReference type="InterPro" id="IPR020103">
    <property type="entry name" value="PsdUridine_synth_cat_dom_sf"/>
</dbReference>
<dbReference type="InterPro" id="IPR001406">
    <property type="entry name" value="PsdUridine_synth_TruA"/>
</dbReference>
<dbReference type="InterPro" id="IPR020097">
    <property type="entry name" value="PsdUridine_synth_TruA_a/b_dom"/>
</dbReference>
<dbReference type="InterPro" id="IPR020095">
    <property type="entry name" value="PsdUridine_synth_TruA_C"/>
</dbReference>
<dbReference type="InterPro" id="IPR020094">
    <property type="entry name" value="TruA/RsuA/RluB/E/F_N"/>
</dbReference>
<dbReference type="NCBIfam" id="TIGR00071">
    <property type="entry name" value="hisT_truA"/>
    <property type="match status" value="1"/>
</dbReference>
<dbReference type="PANTHER" id="PTHR11142">
    <property type="entry name" value="PSEUDOURIDYLATE SYNTHASE"/>
    <property type="match status" value="1"/>
</dbReference>
<dbReference type="PANTHER" id="PTHR11142:SF0">
    <property type="entry name" value="TRNA PSEUDOURIDINE SYNTHASE-LIKE 1"/>
    <property type="match status" value="1"/>
</dbReference>
<dbReference type="Pfam" id="PF01416">
    <property type="entry name" value="PseudoU_synth_1"/>
    <property type="match status" value="2"/>
</dbReference>
<dbReference type="PIRSF" id="PIRSF001430">
    <property type="entry name" value="tRNA_psdUrid_synth"/>
    <property type="match status" value="1"/>
</dbReference>
<dbReference type="SUPFAM" id="SSF55120">
    <property type="entry name" value="Pseudouridine synthase"/>
    <property type="match status" value="1"/>
</dbReference>
<organism>
    <name type="scientific">Paramagnetospirillum magneticum (strain ATCC 700264 / AMB-1)</name>
    <name type="common">Magnetospirillum magneticum</name>
    <dbReference type="NCBI Taxonomy" id="342108"/>
    <lineage>
        <taxon>Bacteria</taxon>
        <taxon>Pseudomonadati</taxon>
        <taxon>Pseudomonadota</taxon>
        <taxon>Alphaproteobacteria</taxon>
        <taxon>Rhodospirillales</taxon>
        <taxon>Magnetospirillaceae</taxon>
        <taxon>Paramagnetospirillum</taxon>
    </lineage>
</organism>
<keyword id="KW-0413">Isomerase</keyword>
<keyword id="KW-0819">tRNA processing</keyword>
<protein>
    <recommendedName>
        <fullName evidence="1">tRNA pseudouridine synthase A</fullName>
        <ecNumber evidence="1">5.4.99.12</ecNumber>
    </recommendedName>
    <alternativeName>
        <fullName evidence="1">tRNA pseudouridine(38-40) synthase</fullName>
    </alternativeName>
    <alternativeName>
        <fullName evidence="1">tRNA pseudouridylate synthase I</fullName>
    </alternativeName>
    <alternativeName>
        <fullName evidence="1">tRNA-uridine isomerase I</fullName>
    </alternativeName>
</protein>
<accession>Q2WAT0</accession>
<feature type="chain" id="PRO_1000017108" description="tRNA pseudouridine synthase A">
    <location>
        <begin position="1"/>
        <end position="256"/>
    </location>
</feature>
<feature type="active site" description="Nucleophile" evidence="1">
    <location>
        <position position="52"/>
    </location>
</feature>
<feature type="binding site" evidence="1">
    <location>
        <position position="111"/>
    </location>
    <ligand>
        <name>substrate</name>
    </ligand>
</feature>
<gene>
    <name evidence="1" type="primary">truA</name>
    <name type="ordered locus">amb0241</name>
</gene>
<reference key="1">
    <citation type="journal article" date="2005" name="DNA Res.">
        <title>Complete genome sequence of the facultative anaerobic magnetotactic bacterium Magnetospirillum sp. strain AMB-1.</title>
        <authorList>
            <person name="Matsunaga T."/>
            <person name="Okamura Y."/>
            <person name="Fukuda Y."/>
            <person name="Wahyudi A.T."/>
            <person name="Murase Y."/>
            <person name="Takeyama H."/>
        </authorList>
    </citation>
    <scope>NUCLEOTIDE SEQUENCE [LARGE SCALE GENOMIC DNA]</scope>
    <source>
        <strain>ATCC 700264 / AMB-1</strain>
    </source>
</reference>
<proteinExistence type="inferred from homology"/>
<evidence type="ECO:0000255" key="1">
    <source>
        <dbReference type="HAMAP-Rule" id="MF_00171"/>
    </source>
</evidence>